<evidence type="ECO:0000255" key="1">
    <source>
        <dbReference type="HAMAP-Rule" id="MF_01328"/>
    </source>
</evidence>
<evidence type="ECO:0000256" key="2">
    <source>
        <dbReference type="SAM" id="MobiDB-lite"/>
    </source>
</evidence>
<evidence type="ECO:0000305" key="3"/>
<name>RL4_AZOVD</name>
<accession>C1DKL4</accession>
<gene>
    <name evidence="1" type="primary">rplD</name>
    <name type="ordered locus">Avin_06260</name>
</gene>
<protein>
    <recommendedName>
        <fullName evidence="1">Large ribosomal subunit protein uL4</fullName>
    </recommendedName>
    <alternativeName>
        <fullName evidence="3">50S ribosomal protein L4</fullName>
    </alternativeName>
</protein>
<keyword id="KW-0687">Ribonucleoprotein</keyword>
<keyword id="KW-0689">Ribosomal protein</keyword>
<keyword id="KW-0694">RNA-binding</keyword>
<keyword id="KW-0699">rRNA-binding</keyword>
<reference key="1">
    <citation type="journal article" date="2009" name="J. Bacteriol.">
        <title>Genome sequence of Azotobacter vinelandii, an obligate aerobe specialized to support diverse anaerobic metabolic processes.</title>
        <authorList>
            <person name="Setubal J.C."/>
            <person name="Dos Santos P."/>
            <person name="Goldman B.S."/>
            <person name="Ertesvaag H."/>
            <person name="Espin G."/>
            <person name="Rubio L.M."/>
            <person name="Valla S."/>
            <person name="Almeida N.F."/>
            <person name="Balasubramanian D."/>
            <person name="Cromes L."/>
            <person name="Curatti L."/>
            <person name="Du Z."/>
            <person name="Godsy E."/>
            <person name="Goodner B."/>
            <person name="Hellner-Burris K."/>
            <person name="Hernandez J.A."/>
            <person name="Houmiel K."/>
            <person name="Imperial J."/>
            <person name="Kennedy C."/>
            <person name="Larson T.J."/>
            <person name="Latreille P."/>
            <person name="Ligon L.S."/>
            <person name="Lu J."/>
            <person name="Maerk M."/>
            <person name="Miller N.M."/>
            <person name="Norton S."/>
            <person name="O'Carroll I.P."/>
            <person name="Paulsen I."/>
            <person name="Raulfs E.C."/>
            <person name="Roemer R."/>
            <person name="Rosser J."/>
            <person name="Segura D."/>
            <person name="Slater S."/>
            <person name="Stricklin S.L."/>
            <person name="Studholme D.J."/>
            <person name="Sun J."/>
            <person name="Viana C.J."/>
            <person name="Wallin E."/>
            <person name="Wang B."/>
            <person name="Wheeler C."/>
            <person name="Zhu H."/>
            <person name="Dean D.R."/>
            <person name="Dixon R."/>
            <person name="Wood D."/>
        </authorList>
    </citation>
    <scope>NUCLEOTIDE SEQUENCE [LARGE SCALE GENOMIC DNA]</scope>
    <source>
        <strain>DJ / ATCC BAA-1303</strain>
    </source>
</reference>
<feature type="chain" id="PRO_1000214562" description="Large ribosomal subunit protein uL4">
    <location>
        <begin position="1"/>
        <end position="200"/>
    </location>
</feature>
<feature type="region of interest" description="Disordered" evidence="2">
    <location>
        <begin position="38"/>
        <end position="75"/>
    </location>
</feature>
<proteinExistence type="inferred from homology"/>
<dbReference type="EMBL" id="CP001157">
    <property type="protein sequence ID" value="ACO76877.1"/>
    <property type="molecule type" value="Genomic_DNA"/>
</dbReference>
<dbReference type="RefSeq" id="WP_012699303.1">
    <property type="nucleotide sequence ID" value="NC_012560.1"/>
</dbReference>
<dbReference type="SMR" id="C1DKL4"/>
<dbReference type="STRING" id="322710.Avin_06260"/>
<dbReference type="EnsemblBacteria" id="ACO76877">
    <property type="protein sequence ID" value="ACO76877"/>
    <property type="gene ID" value="Avin_06260"/>
</dbReference>
<dbReference type="GeneID" id="88184037"/>
<dbReference type="KEGG" id="avn:Avin_06260"/>
<dbReference type="eggNOG" id="COG0088">
    <property type="taxonomic scope" value="Bacteria"/>
</dbReference>
<dbReference type="HOGENOM" id="CLU_041575_5_2_6"/>
<dbReference type="OrthoDB" id="9803201at2"/>
<dbReference type="Proteomes" id="UP000002424">
    <property type="component" value="Chromosome"/>
</dbReference>
<dbReference type="GO" id="GO:1990904">
    <property type="term" value="C:ribonucleoprotein complex"/>
    <property type="evidence" value="ECO:0007669"/>
    <property type="project" value="UniProtKB-KW"/>
</dbReference>
<dbReference type="GO" id="GO:0005840">
    <property type="term" value="C:ribosome"/>
    <property type="evidence" value="ECO:0007669"/>
    <property type="project" value="UniProtKB-KW"/>
</dbReference>
<dbReference type="GO" id="GO:0019843">
    <property type="term" value="F:rRNA binding"/>
    <property type="evidence" value="ECO:0007669"/>
    <property type="project" value="UniProtKB-UniRule"/>
</dbReference>
<dbReference type="GO" id="GO:0003735">
    <property type="term" value="F:structural constituent of ribosome"/>
    <property type="evidence" value="ECO:0007669"/>
    <property type="project" value="InterPro"/>
</dbReference>
<dbReference type="GO" id="GO:0006412">
    <property type="term" value="P:translation"/>
    <property type="evidence" value="ECO:0007669"/>
    <property type="project" value="UniProtKB-UniRule"/>
</dbReference>
<dbReference type="FunFam" id="3.40.1370.10:FF:000001">
    <property type="entry name" value="50S ribosomal protein L4"/>
    <property type="match status" value="1"/>
</dbReference>
<dbReference type="Gene3D" id="3.40.1370.10">
    <property type="match status" value="1"/>
</dbReference>
<dbReference type="HAMAP" id="MF_01328_B">
    <property type="entry name" value="Ribosomal_uL4_B"/>
    <property type="match status" value="1"/>
</dbReference>
<dbReference type="InterPro" id="IPR002136">
    <property type="entry name" value="Ribosomal_uL4"/>
</dbReference>
<dbReference type="InterPro" id="IPR013005">
    <property type="entry name" value="Ribosomal_uL4-like"/>
</dbReference>
<dbReference type="InterPro" id="IPR023574">
    <property type="entry name" value="Ribosomal_uL4_dom_sf"/>
</dbReference>
<dbReference type="NCBIfam" id="TIGR03953">
    <property type="entry name" value="rplD_bact"/>
    <property type="match status" value="1"/>
</dbReference>
<dbReference type="PANTHER" id="PTHR10746">
    <property type="entry name" value="50S RIBOSOMAL PROTEIN L4"/>
    <property type="match status" value="1"/>
</dbReference>
<dbReference type="PANTHER" id="PTHR10746:SF6">
    <property type="entry name" value="LARGE RIBOSOMAL SUBUNIT PROTEIN UL4M"/>
    <property type="match status" value="1"/>
</dbReference>
<dbReference type="Pfam" id="PF00573">
    <property type="entry name" value="Ribosomal_L4"/>
    <property type="match status" value="1"/>
</dbReference>
<dbReference type="SUPFAM" id="SSF52166">
    <property type="entry name" value="Ribosomal protein L4"/>
    <property type="match status" value="1"/>
</dbReference>
<comment type="function">
    <text evidence="1">One of the primary rRNA binding proteins, this protein initially binds near the 5'-end of the 23S rRNA. It is important during the early stages of 50S assembly. It makes multiple contacts with different domains of the 23S rRNA in the assembled 50S subunit and ribosome.</text>
</comment>
<comment type="function">
    <text evidence="1">Forms part of the polypeptide exit tunnel.</text>
</comment>
<comment type="subunit">
    <text evidence="1">Part of the 50S ribosomal subunit.</text>
</comment>
<comment type="similarity">
    <text evidence="1">Belongs to the universal ribosomal protein uL4 family.</text>
</comment>
<organism>
    <name type="scientific">Azotobacter vinelandii (strain DJ / ATCC BAA-1303)</name>
    <dbReference type="NCBI Taxonomy" id="322710"/>
    <lineage>
        <taxon>Bacteria</taxon>
        <taxon>Pseudomonadati</taxon>
        <taxon>Pseudomonadota</taxon>
        <taxon>Gammaproteobacteria</taxon>
        <taxon>Pseudomonadales</taxon>
        <taxon>Pseudomonadaceae</taxon>
        <taxon>Azotobacter</taxon>
    </lineage>
</organism>
<sequence>MQLNVNGAQAIEVSERTFGGEFNETLVHQAVVAYLAGGRQGSKQQKNRSDVSGGGKRPWRQKGTGRARAGTSRGPLWRGGGVTFAARPQNHDQKLNKKMYRAALRSILSELVRQERLVVVEDFAVDAPKTKSLVSKLGGLGLSDVLIVSDAVDQNLYLAARNLPHVDVRDVLGSDPVSLIAYDKVLITVPAVKKFEELLG</sequence>